<feature type="chain" id="PRO_0000352088" description="Small ribosomal subunit protein uS2c">
    <location>
        <begin position="1"/>
        <end position="236"/>
    </location>
</feature>
<accession>A1EA01</accession>
<dbReference type="EMBL" id="EF115543">
    <property type="protein sequence ID" value="ABK79573.1"/>
    <property type="molecule type" value="Genomic_DNA"/>
</dbReference>
<dbReference type="RefSeq" id="YP_874729.1">
    <property type="nucleotide sequence ID" value="NC_008591.1"/>
</dbReference>
<dbReference type="SMR" id="A1EA01"/>
<dbReference type="GeneID" id="4524923"/>
<dbReference type="GO" id="GO:0009507">
    <property type="term" value="C:chloroplast"/>
    <property type="evidence" value="ECO:0007669"/>
    <property type="project" value="UniProtKB-SubCell"/>
</dbReference>
<dbReference type="GO" id="GO:0005763">
    <property type="term" value="C:mitochondrial small ribosomal subunit"/>
    <property type="evidence" value="ECO:0007669"/>
    <property type="project" value="TreeGrafter"/>
</dbReference>
<dbReference type="GO" id="GO:0003735">
    <property type="term" value="F:structural constituent of ribosome"/>
    <property type="evidence" value="ECO:0007669"/>
    <property type="project" value="InterPro"/>
</dbReference>
<dbReference type="GO" id="GO:0006412">
    <property type="term" value="P:translation"/>
    <property type="evidence" value="ECO:0007669"/>
    <property type="project" value="UniProtKB-UniRule"/>
</dbReference>
<dbReference type="CDD" id="cd01425">
    <property type="entry name" value="RPS2"/>
    <property type="match status" value="1"/>
</dbReference>
<dbReference type="FunFam" id="1.10.287.610:FF:000001">
    <property type="entry name" value="30S ribosomal protein S2"/>
    <property type="match status" value="1"/>
</dbReference>
<dbReference type="Gene3D" id="3.40.50.10490">
    <property type="entry name" value="Glucose-6-phosphate isomerase like protein, domain 1"/>
    <property type="match status" value="1"/>
</dbReference>
<dbReference type="Gene3D" id="1.10.287.610">
    <property type="entry name" value="Helix hairpin bin"/>
    <property type="match status" value="1"/>
</dbReference>
<dbReference type="HAMAP" id="MF_00291_B">
    <property type="entry name" value="Ribosomal_uS2_B"/>
    <property type="match status" value="1"/>
</dbReference>
<dbReference type="InterPro" id="IPR001865">
    <property type="entry name" value="Ribosomal_uS2"/>
</dbReference>
<dbReference type="InterPro" id="IPR005706">
    <property type="entry name" value="Ribosomal_uS2_bac/mit/plastid"/>
</dbReference>
<dbReference type="InterPro" id="IPR018130">
    <property type="entry name" value="Ribosomal_uS2_CS"/>
</dbReference>
<dbReference type="InterPro" id="IPR023591">
    <property type="entry name" value="Ribosomal_uS2_flav_dom_sf"/>
</dbReference>
<dbReference type="NCBIfam" id="TIGR01011">
    <property type="entry name" value="rpsB_bact"/>
    <property type="match status" value="1"/>
</dbReference>
<dbReference type="PANTHER" id="PTHR12534">
    <property type="entry name" value="30S RIBOSOMAL PROTEIN S2 PROKARYOTIC AND ORGANELLAR"/>
    <property type="match status" value="1"/>
</dbReference>
<dbReference type="PANTHER" id="PTHR12534:SF0">
    <property type="entry name" value="SMALL RIBOSOMAL SUBUNIT PROTEIN US2M"/>
    <property type="match status" value="1"/>
</dbReference>
<dbReference type="Pfam" id="PF00318">
    <property type="entry name" value="Ribosomal_S2"/>
    <property type="match status" value="1"/>
</dbReference>
<dbReference type="PRINTS" id="PR00395">
    <property type="entry name" value="RIBOSOMALS2"/>
</dbReference>
<dbReference type="SUPFAM" id="SSF52313">
    <property type="entry name" value="Ribosomal protein S2"/>
    <property type="match status" value="1"/>
</dbReference>
<dbReference type="PROSITE" id="PS00962">
    <property type="entry name" value="RIBOSOMAL_S2_1"/>
    <property type="match status" value="1"/>
</dbReference>
<dbReference type="PROSITE" id="PS00963">
    <property type="entry name" value="RIBOSOMAL_S2_2"/>
    <property type="match status" value="1"/>
</dbReference>
<reference key="1">
    <citation type="journal article" date="2007" name="Theor. Appl. Genet.">
        <title>Complete chloroplast genome sequences of Hordeum vulgare, Sorghum bicolor and Agrostis stolonifera, and comparative analyses with other grass genomes.</title>
        <authorList>
            <person name="Saski C."/>
            <person name="Lee S.-B."/>
            <person name="Fjellheim S."/>
            <person name="Guda C."/>
            <person name="Jansen R.K."/>
            <person name="Luo H."/>
            <person name="Tomkins J."/>
            <person name="Rognli O.A."/>
            <person name="Daniell H."/>
            <person name="Clarke J.L."/>
        </authorList>
    </citation>
    <scope>NUCLEOTIDE SEQUENCE [LARGE SCALE GENOMIC DNA]</scope>
    <source>
        <strain>cv. Penn A-4</strain>
    </source>
</reference>
<protein>
    <recommendedName>
        <fullName evidence="1">Small ribosomal subunit protein uS2c</fullName>
    </recommendedName>
    <alternativeName>
        <fullName>30S ribosomal protein S2, chloroplastic</fullName>
    </alternativeName>
</protein>
<sequence>MTRRYWNINLKEMIEAGVHFGHGIKKWNPKMAPYISAKRKGTHIINLARTARFLSEACDLVFDAASQGKSFLIVGTKKRATDLVASAAIRARCHYVNKKWFSGMLTNWSITKTRLSQFRDLRAEEKMGKFQHLPKRDVAILKRKLSTLQRYLGGIKYMTRLPDIVIVLDQQKEYIALRECAILGIPTISLVDTNCDPDLANISIPANDDTMTSIRLILNKLVFAICEGRSLYIRNH</sequence>
<comment type="subcellular location">
    <subcellularLocation>
        <location>Plastid</location>
        <location>Chloroplast</location>
    </subcellularLocation>
</comment>
<comment type="similarity">
    <text evidence="1">Belongs to the universal ribosomal protein uS2 family.</text>
</comment>
<proteinExistence type="inferred from homology"/>
<evidence type="ECO:0000305" key="1"/>
<geneLocation type="chloroplast"/>
<keyword id="KW-0150">Chloroplast</keyword>
<keyword id="KW-0934">Plastid</keyword>
<keyword id="KW-0687">Ribonucleoprotein</keyword>
<keyword id="KW-0689">Ribosomal protein</keyword>
<organism>
    <name type="scientific">Agrostis stolonifera</name>
    <name type="common">Creeping bentgrass</name>
    <dbReference type="NCBI Taxonomy" id="63632"/>
    <lineage>
        <taxon>Eukaryota</taxon>
        <taxon>Viridiplantae</taxon>
        <taxon>Streptophyta</taxon>
        <taxon>Embryophyta</taxon>
        <taxon>Tracheophyta</taxon>
        <taxon>Spermatophyta</taxon>
        <taxon>Magnoliopsida</taxon>
        <taxon>Liliopsida</taxon>
        <taxon>Poales</taxon>
        <taxon>Poaceae</taxon>
        <taxon>BOP clade</taxon>
        <taxon>Pooideae</taxon>
        <taxon>Poodae</taxon>
        <taxon>Poeae</taxon>
        <taxon>Poeae Chloroplast Group 1 (Aveneae type)</taxon>
        <taxon>Agrostidodinae</taxon>
        <taxon>Agrostidinae</taxon>
        <taxon>Agrostis</taxon>
    </lineage>
</organism>
<name>RR2_AGRST</name>
<gene>
    <name type="primary">rps2</name>
</gene>